<gene>
    <name type="primary">BETV1M</name>
</gene>
<gene>
    <name type="primary">BETV1N</name>
</gene>
<sequence>MGVFNYESETTSVIPAARLFKAFILDGDNLIPKVAPQAISSVENIEGNGGPGTIKKITFPEGSPFKYVKERVDEVDHANFKYSYSMIEGGALGDTLEKICNEIKIVATPDGGSILKISNKYHTKGDHEMKAEHMKAIKEKGEALLRAVESYLLAHSDAYN</sequence>
<dbReference type="EMBL" id="X81972">
    <property type="protein sequence ID" value="CAA57497.1"/>
    <property type="molecule type" value="mRNA"/>
</dbReference>
<dbReference type="EMBL" id="X82028">
    <property type="protein sequence ID" value="CAA57550.1"/>
    <property type="molecule type" value="mRNA"/>
</dbReference>
<dbReference type="PIR" id="A57427">
    <property type="entry name" value="A57427"/>
</dbReference>
<dbReference type="SMR" id="P43186"/>
<dbReference type="Allergome" id="107">
    <property type="allergen name" value="Bet v 1.0204"/>
</dbReference>
<dbReference type="Allergome" id="89">
    <property type="allergen name" value="Bet v 1"/>
</dbReference>
<dbReference type="GO" id="GO:0005737">
    <property type="term" value="C:cytoplasm"/>
    <property type="evidence" value="ECO:0007669"/>
    <property type="project" value="UniProtKB-SubCell"/>
</dbReference>
<dbReference type="GO" id="GO:0005634">
    <property type="term" value="C:nucleus"/>
    <property type="evidence" value="ECO:0007669"/>
    <property type="project" value="TreeGrafter"/>
</dbReference>
<dbReference type="GO" id="GO:0010427">
    <property type="term" value="F:abscisic acid binding"/>
    <property type="evidence" value="ECO:0007669"/>
    <property type="project" value="InterPro"/>
</dbReference>
<dbReference type="GO" id="GO:0004864">
    <property type="term" value="F:protein phosphatase inhibitor activity"/>
    <property type="evidence" value="ECO:0007669"/>
    <property type="project" value="InterPro"/>
</dbReference>
<dbReference type="GO" id="GO:0038023">
    <property type="term" value="F:signaling receptor activity"/>
    <property type="evidence" value="ECO:0007669"/>
    <property type="project" value="InterPro"/>
</dbReference>
<dbReference type="GO" id="GO:0009738">
    <property type="term" value="P:abscisic acid-activated signaling pathway"/>
    <property type="evidence" value="ECO:0007669"/>
    <property type="project" value="InterPro"/>
</dbReference>
<dbReference type="GO" id="GO:0006952">
    <property type="term" value="P:defense response"/>
    <property type="evidence" value="ECO:0007669"/>
    <property type="project" value="UniProtKB-KW"/>
</dbReference>
<dbReference type="CDD" id="cd07816">
    <property type="entry name" value="Bet_v1-like"/>
    <property type="match status" value="1"/>
</dbReference>
<dbReference type="FunFam" id="3.30.530.20:FF:000007">
    <property type="entry name" value="Major pollen allergen Bet v 1-A"/>
    <property type="match status" value="1"/>
</dbReference>
<dbReference type="Gene3D" id="3.30.530.20">
    <property type="match status" value="1"/>
</dbReference>
<dbReference type="InterPro" id="IPR000916">
    <property type="entry name" value="Bet_v_I/MLP"/>
</dbReference>
<dbReference type="InterPro" id="IPR024949">
    <property type="entry name" value="Bet_v_I_allergen"/>
</dbReference>
<dbReference type="InterPro" id="IPR050279">
    <property type="entry name" value="Plant_def-hormone_signal"/>
</dbReference>
<dbReference type="InterPro" id="IPR023393">
    <property type="entry name" value="START-like_dom_sf"/>
</dbReference>
<dbReference type="PANTHER" id="PTHR31213">
    <property type="entry name" value="OS08G0374000 PROTEIN-RELATED"/>
    <property type="match status" value="1"/>
</dbReference>
<dbReference type="PANTHER" id="PTHR31213:SF55">
    <property type="entry name" value="STRESS-INDUCED PROTEIN SAM22"/>
    <property type="match status" value="1"/>
</dbReference>
<dbReference type="Pfam" id="PF00407">
    <property type="entry name" value="Bet_v_1"/>
    <property type="match status" value="1"/>
</dbReference>
<dbReference type="PRINTS" id="PR00634">
    <property type="entry name" value="BETALLERGEN"/>
</dbReference>
<dbReference type="SUPFAM" id="SSF55961">
    <property type="entry name" value="Bet v1-like"/>
    <property type="match status" value="1"/>
</dbReference>
<dbReference type="PROSITE" id="PS00451">
    <property type="entry name" value="PATHOGENESIS_BETVI"/>
    <property type="match status" value="1"/>
</dbReference>
<reference key="1">
    <citation type="journal article" date="1995" name="J. Biol. Chem.">
        <title>Isoforms of Bet v 1, the major birch pollen allergen, analyzed by liquid chromatography, mass spectrometry, and cDNA cloning.</title>
        <authorList>
            <person name="Swoboda I."/>
            <person name="Jilek A."/>
            <person name="Ferreira F."/>
            <person name="Engel E."/>
            <person name="Hoffman-Sommergruber K."/>
            <person name="Scheiner O."/>
            <person name="Kraft D."/>
            <person name="Breiteneder H."/>
            <person name="Pittenauer E."/>
            <person name="Schmid E."/>
            <person name="Vicente O."/>
            <person name="Heberle-Bors E."/>
            <person name="Ahorn H."/>
            <person name="Breitenbach M."/>
        </authorList>
    </citation>
    <scope>NUCLEOTIDE SEQUENCE [MRNA]</scope>
    <scope>PARTIAL PROTEIN SEQUENCE</scope>
    <source>
        <tissue>Pollen</tissue>
    </source>
</reference>
<name>BEV1M_BETPN</name>
<proteinExistence type="evidence at protein level"/>
<feature type="initiator methionine" description="Removed">
    <location>
        <position position="1"/>
    </location>
</feature>
<feature type="chain" id="PRO_0000154184" description="Major pollen allergen Bet v 1-M/N">
    <location>
        <begin position="2"/>
        <end position="160"/>
    </location>
</feature>
<feature type="binding site" evidence="2">
    <location>
        <position position="55"/>
    </location>
    <ligand>
        <name>brassinolide</name>
        <dbReference type="ChEBI" id="CHEBI:28277"/>
    </ligand>
</feature>
<feature type="binding site" evidence="2">
    <location>
        <position position="82"/>
    </location>
    <ligand>
        <name>brassinolide</name>
        <dbReference type="ChEBI" id="CHEBI:28277"/>
    </ligand>
</feature>
<feature type="binding site" evidence="2">
    <location>
        <position position="84"/>
    </location>
    <ligand>
        <name>brassinolide</name>
        <dbReference type="ChEBI" id="CHEBI:28277"/>
    </ligand>
</feature>
<feature type="binding site" evidence="2">
    <location>
        <position position="101"/>
    </location>
    <ligand>
        <name>brassinolide</name>
        <dbReference type="ChEBI" id="CHEBI:28277"/>
    </ligand>
</feature>
<accession>P43186</accession>
<comment type="function">
    <text evidence="1">May be a general steroid carrier protein.</text>
</comment>
<comment type="subcellular location">
    <subcellularLocation>
        <location>Cytoplasm</location>
    </subcellularLocation>
</comment>
<comment type="allergen">
    <text>Causes an allergic reaction in human. Is a cause of type I allergic reactions in Europe, North America and USSR.</text>
</comment>
<comment type="similarity">
    <text evidence="3">Belongs to the BetVI family.</text>
</comment>
<evidence type="ECO:0000250" key="1"/>
<evidence type="ECO:0000250" key="2">
    <source>
        <dbReference type="UniProtKB" id="P43185"/>
    </source>
</evidence>
<evidence type="ECO:0000305" key="3"/>
<organism>
    <name type="scientific">Betula pendula</name>
    <name type="common">European white birch</name>
    <name type="synonym">Betula verrucosa</name>
    <dbReference type="NCBI Taxonomy" id="3505"/>
    <lineage>
        <taxon>Eukaryota</taxon>
        <taxon>Viridiplantae</taxon>
        <taxon>Streptophyta</taxon>
        <taxon>Embryophyta</taxon>
        <taxon>Tracheophyta</taxon>
        <taxon>Spermatophyta</taxon>
        <taxon>Magnoliopsida</taxon>
        <taxon>eudicotyledons</taxon>
        <taxon>Gunneridae</taxon>
        <taxon>Pentapetalae</taxon>
        <taxon>rosids</taxon>
        <taxon>fabids</taxon>
        <taxon>Fagales</taxon>
        <taxon>Betulaceae</taxon>
        <taxon>Betula</taxon>
    </lineage>
</organism>
<protein>
    <recommendedName>
        <fullName>Major pollen allergen Bet v 1-M/N</fullName>
    </recommendedName>
    <alternativeName>
        <fullName>Allergen Bet v I-M/N</fullName>
    </alternativeName>
    <allergenName>Bet v 1-M/N</allergenName>
</protein>
<keyword id="KW-0020">Allergen</keyword>
<keyword id="KW-0963">Cytoplasm</keyword>
<keyword id="KW-0903">Direct protein sequencing</keyword>
<keyword id="KW-0568">Pathogenesis-related protein</keyword>
<keyword id="KW-0611">Plant defense</keyword>